<reference key="1">
    <citation type="submission" date="2006-05" db="EMBL/GenBank/DDBJ databases">
        <authorList>
            <consortium name="Genoscope"/>
        </authorList>
    </citation>
    <scope>NUCLEOTIDE SEQUENCE [LARGE SCALE GENOMIC DNA]</scope>
    <source>
        <strain>RCC307</strain>
    </source>
</reference>
<organism>
    <name type="scientific">Synechococcus sp. (strain RCC307)</name>
    <dbReference type="NCBI Taxonomy" id="316278"/>
    <lineage>
        <taxon>Bacteria</taxon>
        <taxon>Bacillati</taxon>
        <taxon>Cyanobacteriota</taxon>
        <taxon>Cyanophyceae</taxon>
        <taxon>Synechococcales</taxon>
        <taxon>Synechococcaceae</taxon>
        <taxon>Synechococcus</taxon>
    </lineage>
</organism>
<accession>A5GW20</accession>
<sequence>MIVAGVDEVGRGCLFGPVWAAAVILKAEAFDRLPALGVTDSKALSAKRRQALLPEIHSHCLSYGLGQASAACIDAVGIRAATELAMCRALQRLCHSPDHVLVDGSLPLRPWPGSQETVVAGDSHCLAIACASILAKEGRDALLQRLDQRWPGYGLASHKGYGTKAHRTALLQWGPTPLHRLSFLAPELKGGSPAGASSGNLE</sequence>
<keyword id="KW-0963">Cytoplasm</keyword>
<keyword id="KW-0255">Endonuclease</keyword>
<keyword id="KW-0378">Hydrolase</keyword>
<keyword id="KW-0464">Manganese</keyword>
<keyword id="KW-0479">Metal-binding</keyword>
<keyword id="KW-0540">Nuclease</keyword>
<keyword id="KW-1185">Reference proteome</keyword>
<dbReference type="EC" id="3.1.26.4" evidence="1"/>
<dbReference type="EMBL" id="CT978603">
    <property type="protein sequence ID" value="CAK29079.1"/>
    <property type="molecule type" value="Genomic_DNA"/>
</dbReference>
<dbReference type="SMR" id="A5GW20"/>
<dbReference type="STRING" id="316278.SynRCC307_2176"/>
<dbReference type="KEGG" id="syr:SynRCC307_2176"/>
<dbReference type="eggNOG" id="COG0164">
    <property type="taxonomic scope" value="Bacteria"/>
</dbReference>
<dbReference type="HOGENOM" id="CLU_036532_3_1_3"/>
<dbReference type="OrthoDB" id="9803420at2"/>
<dbReference type="Proteomes" id="UP000001115">
    <property type="component" value="Chromosome"/>
</dbReference>
<dbReference type="GO" id="GO:0005737">
    <property type="term" value="C:cytoplasm"/>
    <property type="evidence" value="ECO:0007669"/>
    <property type="project" value="UniProtKB-SubCell"/>
</dbReference>
<dbReference type="GO" id="GO:0032299">
    <property type="term" value="C:ribonuclease H2 complex"/>
    <property type="evidence" value="ECO:0007669"/>
    <property type="project" value="TreeGrafter"/>
</dbReference>
<dbReference type="GO" id="GO:0030145">
    <property type="term" value="F:manganese ion binding"/>
    <property type="evidence" value="ECO:0007669"/>
    <property type="project" value="UniProtKB-UniRule"/>
</dbReference>
<dbReference type="GO" id="GO:0003723">
    <property type="term" value="F:RNA binding"/>
    <property type="evidence" value="ECO:0007669"/>
    <property type="project" value="InterPro"/>
</dbReference>
<dbReference type="GO" id="GO:0004523">
    <property type="term" value="F:RNA-DNA hybrid ribonuclease activity"/>
    <property type="evidence" value="ECO:0007669"/>
    <property type="project" value="UniProtKB-UniRule"/>
</dbReference>
<dbReference type="GO" id="GO:0043137">
    <property type="term" value="P:DNA replication, removal of RNA primer"/>
    <property type="evidence" value="ECO:0007669"/>
    <property type="project" value="TreeGrafter"/>
</dbReference>
<dbReference type="GO" id="GO:0006298">
    <property type="term" value="P:mismatch repair"/>
    <property type="evidence" value="ECO:0007669"/>
    <property type="project" value="TreeGrafter"/>
</dbReference>
<dbReference type="CDD" id="cd07182">
    <property type="entry name" value="RNase_HII_bacteria_HII_like"/>
    <property type="match status" value="1"/>
</dbReference>
<dbReference type="Gene3D" id="3.30.420.10">
    <property type="entry name" value="Ribonuclease H-like superfamily/Ribonuclease H"/>
    <property type="match status" value="1"/>
</dbReference>
<dbReference type="HAMAP" id="MF_00052_B">
    <property type="entry name" value="RNase_HII_B"/>
    <property type="match status" value="1"/>
</dbReference>
<dbReference type="InterPro" id="IPR022898">
    <property type="entry name" value="RNase_HII"/>
</dbReference>
<dbReference type="InterPro" id="IPR001352">
    <property type="entry name" value="RNase_HII/HIII"/>
</dbReference>
<dbReference type="InterPro" id="IPR024567">
    <property type="entry name" value="RNase_HII/HIII_dom"/>
</dbReference>
<dbReference type="InterPro" id="IPR012337">
    <property type="entry name" value="RNaseH-like_sf"/>
</dbReference>
<dbReference type="InterPro" id="IPR036397">
    <property type="entry name" value="RNaseH_sf"/>
</dbReference>
<dbReference type="NCBIfam" id="NF000595">
    <property type="entry name" value="PRK00015.1-3"/>
    <property type="match status" value="1"/>
</dbReference>
<dbReference type="NCBIfam" id="NF010537">
    <property type="entry name" value="PRK13925.1"/>
    <property type="match status" value="1"/>
</dbReference>
<dbReference type="PANTHER" id="PTHR10954">
    <property type="entry name" value="RIBONUCLEASE H2 SUBUNIT A"/>
    <property type="match status" value="1"/>
</dbReference>
<dbReference type="PANTHER" id="PTHR10954:SF18">
    <property type="entry name" value="RIBONUCLEASE HII"/>
    <property type="match status" value="1"/>
</dbReference>
<dbReference type="Pfam" id="PF01351">
    <property type="entry name" value="RNase_HII"/>
    <property type="match status" value="1"/>
</dbReference>
<dbReference type="SUPFAM" id="SSF53098">
    <property type="entry name" value="Ribonuclease H-like"/>
    <property type="match status" value="1"/>
</dbReference>
<dbReference type="PROSITE" id="PS51975">
    <property type="entry name" value="RNASE_H_2"/>
    <property type="match status" value="1"/>
</dbReference>
<evidence type="ECO:0000255" key="1">
    <source>
        <dbReference type="HAMAP-Rule" id="MF_00052"/>
    </source>
</evidence>
<evidence type="ECO:0000255" key="2">
    <source>
        <dbReference type="PROSITE-ProRule" id="PRU01319"/>
    </source>
</evidence>
<name>RNH2_SYNR3</name>
<proteinExistence type="inferred from homology"/>
<protein>
    <recommendedName>
        <fullName evidence="1">Ribonuclease HII</fullName>
        <shortName evidence="1">RNase HII</shortName>
        <ecNumber evidence="1">3.1.26.4</ecNumber>
    </recommendedName>
</protein>
<feature type="chain" id="PRO_0000334964" description="Ribonuclease HII">
    <location>
        <begin position="1"/>
        <end position="202"/>
    </location>
</feature>
<feature type="domain" description="RNase H type-2" evidence="2">
    <location>
        <begin position="1"/>
        <end position="195"/>
    </location>
</feature>
<feature type="binding site" evidence="1">
    <location>
        <position position="7"/>
    </location>
    <ligand>
        <name>a divalent metal cation</name>
        <dbReference type="ChEBI" id="CHEBI:60240"/>
    </ligand>
</feature>
<feature type="binding site" evidence="1">
    <location>
        <position position="8"/>
    </location>
    <ligand>
        <name>a divalent metal cation</name>
        <dbReference type="ChEBI" id="CHEBI:60240"/>
    </ligand>
</feature>
<feature type="binding site" evidence="1">
    <location>
        <position position="103"/>
    </location>
    <ligand>
        <name>a divalent metal cation</name>
        <dbReference type="ChEBI" id="CHEBI:60240"/>
    </ligand>
</feature>
<gene>
    <name evidence="1" type="primary">rnhB</name>
    <name type="ordered locus">SynRCC307_2176</name>
</gene>
<comment type="function">
    <text evidence="1">Endonuclease that specifically degrades the RNA of RNA-DNA hybrids.</text>
</comment>
<comment type="catalytic activity">
    <reaction evidence="1">
        <text>Endonucleolytic cleavage to 5'-phosphomonoester.</text>
        <dbReference type="EC" id="3.1.26.4"/>
    </reaction>
</comment>
<comment type="cofactor">
    <cofactor evidence="1">
        <name>Mn(2+)</name>
        <dbReference type="ChEBI" id="CHEBI:29035"/>
    </cofactor>
    <cofactor evidence="1">
        <name>Mg(2+)</name>
        <dbReference type="ChEBI" id="CHEBI:18420"/>
    </cofactor>
    <text evidence="1">Manganese or magnesium. Binds 1 divalent metal ion per monomer in the absence of substrate. May bind a second metal ion after substrate binding.</text>
</comment>
<comment type="subcellular location">
    <subcellularLocation>
        <location evidence="1">Cytoplasm</location>
    </subcellularLocation>
</comment>
<comment type="similarity">
    <text evidence="1">Belongs to the RNase HII family.</text>
</comment>